<reference key="1">
    <citation type="submission" date="2007-04" db="EMBL/GenBank/DDBJ databases">
        <authorList>
            <consortium name="NIH - Zebrafish Gene Collection (ZGC) project"/>
        </authorList>
    </citation>
    <scope>NUCLEOTIDE SEQUENCE [LARGE SCALE MRNA] (ISOFORMS 1; 2 AND 3)</scope>
    <source>
        <tissue>Embryo</tissue>
    </source>
</reference>
<reference key="2">
    <citation type="journal article" date="2008" name="J. Proteome Res.">
        <title>Online automated in vivo zebrafish phosphoproteomics: from large-scale analysis down to a single embryo.</title>
        <authorList>
            <person name="Lemeer S."/>
            <person name="Pinkse M.W.H."/>
            <person name="Mohammed S."/>
            <person name="van Breukelen B."/>
            <person name="den Hertog J."/>
            <person name="Slijper M."/>
            <person name="Heck A.J.R."/>
        </authorList>
    </citation>
    <scope>PHOSPHORYLATION [LARGE SCALE ANALYSIS] AT SER-181</scope>
    <scope>IDENTIFICATION BY MASS SPECTROMETRY</scope>
    <source>
        <tissue>Embryo</tissue>
    </source>
</reference>
<feature type="chain" id="PRO_0000307735" description="Putative monooxygenase p33MONOX">
    <location>
        <begin position="1"/>
        <end position="317"/>
    </location>
</feature>
<feature type="region of interest" description="Disordered" evidence="2">
    <location>
        <begin position="1"/>
        <end position="26"/>
    </location>
</feature>
<feature type="region of interest" description="Disordered" evidence="2">
    <location>
        <begin position="153"/>
        <end position="261"/>
    </location>
</feature>
<feature type="region of interest" description="Disordered" evidence="2">
    <location>
        <begin position="278"/>
        <end position="303"/>
    </location>
</feature>
<feature type="compositionally biased region" description="Polar residues" evidence="2">
    <location>
        <begin position="167"/>
        <end position="182"/>
    </location>
</feature>
<feature type="compositionally biased region" description="Low complexity" evidence="2">
    <location>
        <begin position="198"/>
        <end position="219"/>
    </location>
</feature>
<feature type="modified residue" description="Phosphoserine" evidence="3">
    <location>
        <position position="181"/>
    </location>
</feature>
<feature type="splice variant" id="VSP_028808" description="In isoform 3." evidence="4">
    <original>KEERQPSSNQSTPAGTPQSSPKQKRRG</original>
    <variation>SFQHGSKCCLFACVYTFKRRSLETSVK</variation>
    <location>
        <begin position="162"/>
        <end position="188"/>
    </location>
</feature>
<feature type="splice variant" id="VSP_028809" description="In isoform 3." evidence="4">
    <location>
        <begin position="189"/>
        <end position="317"/>
    </location>
</feature>
<feature type="splice variant" id="VSP_028810" description="In isoform 2." evidence="4">
    <location>
        <begin position="241"/>
        <end position="247"/>
    </location>
</feature>
<organism>
    <name type="scientific">Danio rerio</name>
    <name type="common">Zebrafish</name>
    <name type="synonym">Brachydanio rerio</name>
    <dbReference type="NCBI Taxonomy" id="7955"/>
    <lineage>
        <taxon>Eukaryota</taxon>
        <taxon>Metazoa</taxon>
        <taxon>Chordata</taxon>
        <taxon>Craniata</taxon>
        <taxon>Vertebrata</taxon>
        <taxon>Euteleostomi</taxon>
        <taxon>Actinopterygii</taxon>
        <taxon>Neopterygii</taxon>
        <taxon>Teleostei</taxon>
        <taxon>Ostariophysi</taxon>
        <taxon>Cypriniformes</taxon>
        <taxon>Danionidae</taxon>
        <taxon>Danioninae</taxon>
        <taxon>Danio</taxon>
    </lineage>
</organism>
<dbReference type="EC" id="1.-.-.-"/>
<dbReference type="EMBL" id="BC076030">
    <property type="protein sequence ID" value="AAH76030.1"/>
    <property type="status" value="ALT_INIT"/>
    <property type="molecule type" value="mRNA"/>
</dbReference>
<dbReference type="EMBL" id="BC108032">
    <property type="protein sequence ID" value="AAI08033.1"/>
    <property type="status" value="ALT_INIT"/>
    <property type="molecule type" value="mRNA"/>
</dbReference>
<dbReference type="EMBL" id="BC139588">
    <property type="protein sequence ID" value="AAI39589.1"/>
    <property type="molecule type" value="mRNA"/>
</dbReference>
<dbReference type="RefSeq" id="NP_001035083.2">
    <molecule id="A4QNZ7-1"/>
    <property type="nucleotide sequence ID" value="NM_001039994.2"/>
</dbReference>
<dbReference type="FunCoup" id="A4QNZ7">
    <property type="interactions" value="2005"/>
</dbReference>
<dbReference type="STRING" id="7955.ENSDARP00000152044"/>
<dbReference type="iPTMnet" id="A4QNZ7"/>
<dbReference type="PaxDb" id="7955-ENSDARP00000009313"/>
<dbReference type="Ensembl" id="ENSDART00000007675">
    <molecule id="A4QNZ7-1"/>
    <property type="protein sequence ID" value="ENSDARP00000009313"/>
    <property type="gene ID" value="ENSDARG00000003127"/>
</dbReference>
<dbReference type="Ensembl" id="ENSDART00000186354">
    <molecule id="A4QNZ7-1"/>
    <property type="protein sequence ID" value="ENSDARP00000152044"/>
    <property type="gene ID" value="ENSDARG00000003127"/>
</dbReference>
<dbReference type="GeneID" id="664766"/>
<dbReference type="KEGG" id="dre:664766"/>
<dbReference type="AGR" id="ZFIN:ZDB-GENE-051113-272"/>
<dbReference type="ZFIN" id="ZDB-GENE-051113-272">
    <property type="gene designation" value="zgc:123105"/>
</dbReference>
<dbReference type="eggNOG" id="ENOG502QRB0">
    <property type="taxonomic scope" value="Eukaryota"/>
</dbReference>
<dbReference type="HOGENOM" id="CLU_079377_0_0_1"/>
<dbReference type="InParanoid" id="A4QNZ7"/>
<dbReference type="OMA" id="TIQAYKG"/>
<dbReference type="OrthoDB" id="8935954at2759"/>
<dbReference type="PhylomeDB" id="A4QNZ7"/>
<dbReference type="TreeFam" id="TF332226"/>
<dbReference type="PRO" id="PR:A4QNZ7"/>
<dbReference type="Proteomes" id="UP000000437">
    <property type="component" value="Chromosome 21"/>
</dbReference>
<dbReference type="Bgee" id="ENSDARG00000003127">
    <property type="expression patterns" value="Expressed in testis and 28 other cell types or tissues"/>
</dbReference>
<dbReference type="ExpressionAtlas" id="A4QNZ7">
    <property type="expression patterns" value="baseline and differential"/>
</dbReference>
<dbReference type="GO" id="GO:0005737">
    <property type="term" value="C:cytoplasm"/>
    <property type="evidence" value="ECO:0000250"/>
    <property type="project" value="UniProtKB"/>
</dbReference>
<dbReference type="GO" id="GO:0016491">
    <property type="term" value="F:oxidoreductase activity"/>
    <property type="evidence" value="ECO:0007669"/>
    <property type="project" value="UniProtKB-KW"/>
</dbReference>
<dbReference type="InterPro" id="IPR026759">
    <property type="entry name" value="P33MONOX"/>
</dbReference>
<dbReference type="PANTHER" id="PTHR28342">
    <property type="entry name" value="MONOOXYGENASE P33MONOX-RELATED"/>
    <property type="match status" value="1"/>
</dbReference>
<dbReference type="PANTHER" id="PTHR28342:SF1">
    <property type="entry name" value="MONOOXYGENASE P33MONOX-RELATED"/>
    <property type="match status" value="1"/>
</dbReference>
<dbReference type="Pfam" id="PF15302">
    <property type="entry name" value="P33MONOX"/>
    <property type="match status" value="1"/>
</dbReference>
<gene>
    <name type="primary">p33monox</name>
    <name type="ORF">zgc:123105</name>
</gene>
<name>P33MX_DANRE</name>
<sequence>MVSRPGDLPALEAGPGSSEGLLGGMSIPAGMTRRALSYDDNLERPMSPPPSDINISNLWKRPVIPERKFARLAEEDESEGGVKQSASFESTKPIPVVKAKASSVMNSLIIKQTQESMQKFEKQAGLTDTGYTPHKGLNAEETRYHRLAESMHKLQMQSTDAKEERQPSSNQSTPAGTPQSSPKQKRRGWFNSQGSTASLTGSEMSTSSSSSVDLASAEGPIERWGVFGPRPQVSKSTTDPGTHPDTSGGFALQSYKGAQKPTPMEVMKAQATRLAEDPTNFKAPPKMEIPTMDGKRQVTRPHKLKHRDMNVLTPSGF</sequence>
<proteinExistence type="evidence at protein level"/>
<comment type="function">
    <text evidence="1">Potential NADPH-dependent oxidoreductase.</text>
</comment>
<comment type="subcellular location">
    <subcellularLocation>
        <location evidence="1">Cytoplasm</location>
    </subcellularLocation>
</comment>
<comment type="alternative products">
    <event type="alternative splicing"/>
    <isoform>
        <id>A4QNZ7-1</id>
        <name>1</name>
        <sequence type="displayed"/>
    </isoform>
    <isoform>
        <id>A4QNZ7-2</id>
        <name>2</name>
        <sequence type="described" ref="VSP_028810"/>
    </isoform>
    <isoform>
        <id>A4QNZ7-3</id>
        <name>3</name>
        <sequence type="described" ref="VSP_028808 VSP_028809"/>
    </isoform>
</comment>
<comment type="similarity">
    <text evidence="5">Belongs to the P33MONOX family.</text>
</comment>
<comment type="sequence caution" evidence="5">
    <conflict type="erroneous initiation">
        <sequence resource="EMBL-CDS" id="AAH76030"/>
    </conflict>
    <text>Extended N-terminus.</text>
</comment>
<comment type="sequence caution" evidence="5">
    <conflict type="erroneous initiation">
        <sequence resource="EMBL-CDS" id="AAI08033"/>
    </conflict>
    <text>Truncated N-terminus.</text>
</comment>
<protein>
    <recommendedName>
        <fullName>Putative monooxygenase p33MONOX</fullName>
        <ecNumber>1.-.-.-</ecNumber>
    </recommendedName>
</protein>
<evidence type="ECO:0000250" key="1"/>
<evidence type="ECO:0000256" key="2">
    <source>
        <dbReference type="SAM" id="MobiDB-lite"/>
    </source>
</evidence>
<evidence type="ECO:0000269" key="3">
    <source>
    </source>
</evidence>
<evidence type="ECO:0000303" key="4">
    <source ref="1"/>
</evidence>
<evidence type="ECO:0000305" key="5"/>
<keyword id="KW-0025">Alternative splicing</keyword>
<keyword id="KW-0963">Cytoplasm</keyword>
<keyword id="KW-0521">NADP</keyword>
<keyword id="KW-0560">Oxidoreductase</keyword>
<keyword id="KW-0597">Phosphoprotein</keyword>
<keyword id="KW-1185">Reference proteome</keyword>
<accession>A4QNZ7</accession>
<accession>Q32PQ0</accession>
<accession>Q6DHE4</accession>